<sequence length="215" mass="23644">MSNNYPHPLLAREGWPFIAIALAVALVINGAAGFGWALPFWLLFIFVVQFFRDPPRPIPQGAKDVLSPADGRIVAIEPVRDPYLDRDSVKISVFMNVFNVHSNRSPVDGEVVARWYNAGRFVNAALDKASVENERNALHLRTRDGHDVTCVQVAGLIARRILCYVEAGASLARGQRYGFIRFGSRVDVYLPAGSRARVTIGDKVSASSTILAELP</sequence>
<protein>
    <recommendedName>
        <fullName evidence="1">Phosphatidylserine decarboxylase proenzyme</fullName>
        <ecNumber evidence="1">4.1.1.65</ecNumber>
    </recommendedName>
    <component>
        <recommendedName>
            <fullName evidence="1">Phosphatidylserine decarboxylase alpha chain</fullName>
        </recommendedName>
    </component>
    <component>
        <recommendedName>
            <fullName evidence="1">Phosphatidylserine decarboxylase beta chain</fullName>
        </recommendedName>
    </component>
</protein>
<gene>
    <name evidence="1" type="primary">psd</name>
    <name type="ordered locus">AZOSEA40460</name>
    <name type="ORF">ebA7135</name>
</gene>
<keyword id="KW-1003">Cell membrane</keyword>
<keyword id="KW-0210">Decarboxylase</keyword>
<keyword id="KW-0444">Lipid biosynthesis</keyword>
<keyword id="KW-0443">Lipid metabolism</keyword>
<keyword id="KW-0456">Lyase</keyword>
<keyword id="KW-0472">Membrane</keyword>
<keyword id="KW-0594">Phospholipid biosynthesis</keyword>
<keyword id="KW-1208">Phospholipid metabolism</keyword>
<keyword id="KW-0670">Pyruvate</keyword>
<keyword id="KW-1185">Reference proteome</keyword>
<keyword id="KW-0865">Zymogen</keyword>
<accession>Q5NXP3</accession>
<dbReference type="EC" id="4.1.1.65" evidence="1"/>
<dbReference type="EMBL" id="CR555306">
    <property type="protein sequence ID" value="CAI10171.1"/>
    <property type="molecule type" value="Genomic_DNA"/>
</dbReference>
<dbReference type="RefSeq" id="WP_011239816.1">
    <property type="nucleotide sequence ID" value="NC_006513.1"/>
</dbReference>
<dbReference type="STRING" id="76114.ebA7135"/>
<dbReference type="KEGG" id="eba:ebA7135"/>
<dbReference type="eggNOG" id="COG0688">
    <property type="taxonomic scope" value="Bacteria"/>
</dbReference>
<dbReference type="HOGENOM" id="CLU_072492_0_0_4"/>
<dbReference type="OrthoDB" id="9790893at2"/>
<dbReference type="UniPathway" id="UPA00558">
    <property type="reaction ID" value="UER00616"/>
</dbReference>
<dbReference type="Proteomes" id="UP000006552">
    <property type="component" value="Chromosome"/>
</dbReference>
<dbReference type="GO" id="GO:0005886">
    <property type="term" value="C:plasma membrane"/>
    <property type="evidence" value="ECO:0007669"/>
    <property type="project" value="UniProtKB-SubCell"/>
</dbReference>
<dbReference type="GO" id="GO:0004609">
    <property type="term" value="F:phosphatidylserine decarboxylase activity"/>
    <property type="evidence" value="ECO:0007669"/>
    <property type="project" value="UniProtKB-UniRule"/>
</dbReference>
<dbReference type="GO" id="GO:0006646">
    <property type="term" value="P:phosphatidylethanolamine biosynthetic process"/>
    <property type="evidence" value="ECO:0007669"/>
    <property type="project" value="UniProtKB-UniRule"/>
</dbReference>
<dbReference type="HAMAP" id="MF_00664">
    <property type="entry name" value="PS_decarb_PSD_A"/>
    <property type="match status" value="1"/>
</dbReference>
<dbReference type="InterPro" id="IPR003817">
    <property type="entry name" value="PS_Dcarbxylase"/>
</dbReference>
<dbReference type="InterPro" id="IPR033175">
    <property type="entry name" value="PSD-A"/>
</dbReference>
<dbReference type="NCBIfam" id="NF003678">
    <property type="entry name" value="PRK05305.1-2"/>
    <property type="match status" value="1"/>
</dbReference>
<dbReference type="NCBIfam" id="NF003680">
    <property type="entry name" value="PRK05305.1-5"/>
    <property type="match status" value="1"/>
</dbReference>
<dbReference type="PANTHER" id="PTHR35809">
    <property type="entry name" value="ARCHAETIDYLSERINE DECARBOXYLASE PROENZYME-RELATED"/>
    <property type="match status" value="1"/>
</dbReference>
<dbReference type="PANTHER" id="PTHR35809:SF1">
    <property type="entry name" value="ARCHAETIDYLSERINE DECARBOXYLASE PROENZYME-RELATED"/>
    <property type="match status" value="1"/>
</dbReference>
<dbReference type="Pfam" id="PF02666">
    <property type="entry name" value="PS_Dcarbxylase"/>
    <property type="match status" value="1"/>
</dbReference>
<feature type="chain" id="PRO_0000262183" description="Phosphatidylserine decarboxylase beta chain" evidence="1">
    <location>
        <begin position="1"/>
        <end position="183"/>
    </location>
</feature>
<feature type="chain" id="PRO_0000262184" description="Phosphatidylserine decarboxylase alpha chain" evidence="1">
    <location>
        <begin position="184"/>
        <end position="215"/>
    </location>
</feature>
<feature type="active site" description="Schiff-base intermediate with substrate; via pyruvic acid" evidence="1">
    <location>
        <position position="184"/>
    </location>
</feature>
<feature type="site" description="Cleavage (non-hydrolytic); by autocatalysis" evidence="1">
    <location>
        <begin position="183"/>
        <end position="184"/>
    </location>
</feature>
<feature type="modified residue" description="Pyruvic acid (Ser); by autocatalysis" evidence="1">
    <location>
        <position position="184"/>
    </location>
</feature>
<reference key="1">
    <citation type="journal article" date="2005" name="Arch. Microbiol.">
        <title>The genome sequence of an anaerobic aromatic-degrading denitrifying bacterium, strain EbN1.</title>
        <authorList>
            <person name="Rabus R."/>
            <person name="Kube M."/>
            <person name="Heider J."/>
            <person name="Beck A."/>
            <person name="Heitmann K."/>
            <person name="Widdel F."/>
            <person name="Reinhardt R."/>
        </authorList>
    </citation>
    <scope>NUCLEOTIDE SEQUENCE [LARGE SCALE GENOMIC DNA]</scope>
    <source>
        <strain>DSM 19018 / LMG 30748 / EbN1</strain>
    </source>
</reference>
<evidence type="ECO:0000255" key="1">
    <source>
        <dbReference type="HAMAP-Rule" id="MF_00664"/>
    </source>
</evidence>
<name>PSD_AROAE</name>
<organism>
    <name type="scientific">Aromatoleum aromaticum (strain DSM 19018 / LMG 30748 / EbN1)</name>
    <name type="common">Azoarcus sp. (strain EbN1)</name>
    <dbReference type="NCBI Taxonomy" id="76114"/>
    <lineage>
        <taxon>Bacteria</taxon>
        <taxon>Pseudomonadati</taxon>
        <taxon>Pseudomonadota</taxon>
        <taxon>Betaproteobacteria</taxon>
        <taxon>Rhodocyclales</taxon>
        <taxon>Rhodocyclaceae</taxon>
        <taxon>Aromatoleum</taxon>
    </lineage>
</organism>
<comment type="function">
    <text evidence="1">Catalyzes the formation of phosphatidylethanolamine (PtdEtn) from phosphatidylserine (PtdSer).</text>
</comment>
<comment type="catalytic activity">
    <reaction evidence="1">
        <text>a 1,2-diacyl-sn-glycero-3-phospho-L-serine + H(+) = a 1,2-diacyl-sn-glycero-3-phosphoethanolamine + CO2</text>
        <dbReference type="Rhea" id="RHEA:20828"/>
        <dbReference type="ChEBI" id="CHEBI:15378"/>
        <dbReference type="ChEBI" id="CHEBI:16526"/>
        <dbReference type="ChEBI" id="CHEBI:57262"/>
        <dbReference type="ChEBI" id="CHEBI:64612"/>
        <dbReference type="EC" id="4.1.1.65"/>
    </reaction>
</comment>
<comment type="cofactor">
    <cofactor evidence="1">
        <name>pyruvate</name>
        <dbReference type="ChEBI" id="CHEBI:15361"/>
    </cofactor>
    <text evidence="1">Binds 1 pyruvoyl group covalently per subunit.</text>
</comment>
<comment type="pathway">
    <text evidence="1">Phospholipid metabolism; phosphatidylethanolamine biosynthesis; phosphatidylethanolamine from CDP-diacylglycerol: step 2/2.</text>
</comment>
<comment type="subunit">
    <text evidence="1">Heterodimer of a large membrane-associated beta subunit and a small pyruvoyl-containing alpha subunit.</text>
</comment>
<comment type="subcellular location">
    <subcellularLocation>
        <location evidence="1">Cell membrane</location>
        <topology evidence="1">Peripheral membrane protein</topology>
    </subcellularLocation>
</comment>
<comment type="PTM">
    <text evidence="1">Is synthesized initially as an inactive proenzyme. Formation of the active enzyme involves a self-maturation process in which the active site pyruvoyl group is generated from an internal serine residue via an autocatalytic post-translational modification. Two non-identical subunits are generated from the proenzyme in this reaction, and the pyruvate is formed at the N-terminus of the alpha chain, which is derived from the carboxyl end of the proenzyme. The post-translation cleavage follows an unusual pathway, termed non-hydrolytic serinolysis, in which the side chain hydroxyl group of the serine supplies its oxygen atom to form the C-terminus of the beta chain, while the remainder of the serine residue undergoes an oxidative deamination to produce ammonia and the pyruvoyl prosthetic group on the alpha chain.</text>
</comment>
<comment type="similarity">
    <text evidence="1">Belongs to the phosphatidylserine decarboxylase family. PSD-A subfamily.</text>
</comment>
<proteinExistence type="inferred from homology"/>